<sequence length="188" mass="20609">MTTRPATDRRKMPTGREEVAAAILQAATDLFAERGPAATSIRDIAARSKVNHGLVFRHFGTKDQLVGAVLDHLGTKLTRLLHSEAPADIIERALDRHGRVLARALLDGYPVGQLQQRFPNVAELLDAVRPRYDSDLGARLAVAHALALQFGWRLFAPMLRSATGIDELTGDELRLSVNDAVARILEPH</sequence>
<reference key="1">
    <citation type="journal article" date="2003" name="Proc. Natl. Acad. Sci. U.S.A.">
        <title>The complete genome sequence of Mycobacterium bovis.</title>
        <authorList>
            <person name="Garnier T."/>
            <person name="Eiglmeier K."/>
            <person name="Camus J.-C."/>
            <person name="Medina N."/>
            <person name="Mansoor H."/>
            <person name="Pryor M."/>
            <person name="Duthoy S."/>
            <person name="Grondin S."/>
            <person name="Lacroix C."/>
            <person name="Monsempe C."/>
            <person name="Simon S."/>
            <person name="Harris B."/>
            <person name="Atkin R."/>
            <person name="Doggett J."/>
            <person name="Mayes R."/>
            <person name="Keating L."/>
            <person name="Wheeler P.R."/>
            <person name="Parkhill J."/>
            <person name="Barrell B.G."/>
            <person name="Cole S.T."/>
            <person name="Gordon S.V."/>
            <person name="Hewinson R.G."/>
        </authorList>
    </citation>
    <scope>NUCLEOTIDE SEQUENCE [LARGE SCALE GENOMIC DNA]</scope>
    <source>
        <strain>ATCC BAA-935 / AF2122/97</strain>
    </source>
</reference>
<reference key="2">
    <citation type="journal article" date="2017" name="Genome Announc.">
        <title>Updated reference genome sequence and annotation of Mycobacterium bovis AF2122/97.</title>
        <authorList>
            <person name="Malone K.M."/>
            <person name="Farrell D."/>
            <person name="Stuber T.P."/>
            <person name="Schubert O.T."/>
            <person name="Aebersold R."/>
            <person name="Robbe-Austerman S."/>
            <person name="Gordon S.V."/>
        </authorList>
    </citation>
    <scope>NUCLEOTIDE SEQUENCE [LARGE SCALE GENOMIC DNA]</scope>
    <scope>GENOME REANNOTATION</scope>
    <source>
        <strain>ATCC BAA-935 / AF2122/97</strain>
    </source>
</reference>
<gene>
    <name type="ordered locus">BQ2027_MB3439C</name>
</gene>
<keyword id="KW-0238">DNA-binding</keyword>
<keyword id="KW-1185">Reference proteome</keyword>
<keyword id="KW-0678">Repressor</keyword>
<keyword id="KW-0804">Transcription</keyword>
<keyword id="KW-0805">Transcription regulation</keyword>
<organism>
    <name type="scientific">Mycobacterium bovis (strain ATCC BAA-935 / AF2122/97)</name>
    <dbReference type="NCBI Taxonomy" id="233413"/>
    <lineage>
        <taxon>Bacteria</taxon>
        <taxon>Bacillati</taxon>
        <taxon>Actinomycetota</taxon>
        <taxon>Actinomycetes</taxon>
        <taxon>Mycobacteriales</taxon>
        <taxon>Mycobacteriaceae</taxon>
        <taxon>Mycobacterium</taxon>
        <taxon>Mycobacterium tuberculosis complex</taxon>
    </lineage>
</organism>
<name>HTHR_MYCBO</name>
<protein>
    <recommendedName>
        <fullName evidence="3">HTH-type transcriptional regulator Mb3439c</fullName>
    </recommendedName>
</protein>
<evidence type="ECO:0000250" key="1">
    <source>
        <dbReference type="UniProtKB" id="P9WMC3"/>
    </source>
</evidence>
<evidence type="ECO:0000255" key="2">
    <source>
        <dbReference type="PROSITE-ProRule" id="PRU00335"/>
    </source>
</evidence>
<evidence type="ECO:0000305" key="3"/>
<proteinExistence type="inferred from homology"/>
<accession>P67443</accession>
<accession>A0A1R3Y437</accession>
<accession>Q50720</accession>
<accession>X2BNW8</accession>
<feature type="chain" id="PRO_0000070671" description="HTH-type transcriptional regulator Mb3439c">
    <location>
        <begin position="1"/>
        <end position="188"/>
    </location>
</feature>
<feature type="domain" description="HTH tetR-type" evidence="2">
    <location>
        <begin position="17"/>
        <end position="77"/>
    </location>
</feature>
<feature type="DNA-binding region" description="H-T-H motif" evidence="2">
    <location>
        <begin position="40"/>
        <end position="59"/>
    </location>
</feature>
<dbReference type="EMBL" id="LT708304">
    <property type="protein sequence ID" value="SIU02067.1"/>
    <property type="molecule type" value="Genomic_DNA"/>
</dbReference>
<dbReference type="RefSeq" id="NP_857079.1">
    <property type="nucleotide sequence ID" value="NC_002945.3"/>
</dbReference>
<dbReference type="RefSeq" id="WP_003417984.1">
    <property type="nucleotide sequence ID" value="NC_002945.4"/>
</dbReference>
<dbReference type="SMR" id="P67443"/>
<dbReference type="KEGG" id="mbo:BQ2027_MB3439C"/>
<dbReference type="PATRIC" id="fig|233413.5.peg.3774"/>
<dbReference type="Proteomes" id="UP000001419">
    <property type="component" value="Chromosome"/>
</dbReference>
<dbReference type="GO" id="GO:0003700">
    <property type="term" value="F:DNA-binding transcription factor activity"/>
    <property type="evidence" value="ECO:0007669"/>
    <property type="project" value="TreeGrafter"/>
</dbReference>
<dbReference type="GO" id="GO:0000976">
    <property type="term" value="F:transcription cis-regulatory region binding"/>
    <property type="evidence" value="ECO:0007669"/>
    <property type="project" value="TreeGrafter"/>
</dbReference>
<dbReference type="Gene3D" id="1.10.357.10">
    <property type="entry name" value="Tetracycline Repressor, domain 2"/>
    <property type="match status" value="1"/>
</dbReference>
<dbReference type="InterPro" id="IPR023772">
    <property type="entry name" value="DNA-bd_HTH_TetR-type_CS"/>
</dbReference>
<dbReference type="InterPro" id="IPR009057">
    <property type="entry name" value="Homeodomain-like_sf"/>
</dbReference>
<dbReference type="InterPro" id="IPR050109">
    <property type="entry name" value="HTH-type_TetR-like_transc_reg"/>
</dbReference>
<dbReference type="InterPro" id="IPR001647">
    <property type="entry name" value="HTH_TetR"/>
</dbReference>
<dbReference type="PANTHER" id="PTHR30055">
    <property type="entry name" value="HTH-TYPE TRANSCRIPTIONAL REGULATOR RUTR"/>
    <property type="match status" value="1"/>
</dbReference>
<dbReference type="PANTHER" id="PTHR30055:SF153">
    <property type="entry name" value="HTH-TYPE TRANSCRIPTIONAL REPRESSOR RV3405C"/>
    <property type="match status" value="1"/>
</dbReference>
<dbReference type="Pfam" id="PF00440">
    <property type="entry name" value="TetR_N"/>
    <property type="match status" value="1"/>
</dbReference>
<dbReference type="PRINTS" id="PR00455">
    <property type="entry name" value="HTHTETR"/>
</dbReference>
<dbReference type="SUPFAM" id="SSF46689">
    <property type="entry name" value="Homeodomain-like"/>
    <property type="match status" value="1"/>
</dbReference>
<dbReference type="PROSITE" id="PS01081">
    <property type="entry name" value="HTH_TETR_1"/>
    <property type="match status" value="1"/>
</dbReference>
<dbReference type="PROSITE" id="PS50977">
    <property type="entry name" value="HTH_TETR_2"/>
    <property type="match status" value="1"/>
</dbReference>
<comment type="function">
    <text evidence="1">Negatively regulates the expression of sulfate ester dioxygenase Mb3440 and its own expression.</text>
</comment>
<comment type="induction">
    <text evidence="1">Negatively autoregulated.</text>
</comment>
<comment type="domain">
    <text evidence="1">Contains an N-terminal DNA-binding domain and a C-terminal ligand binding pocket.</text>
</comment>